<name>PSD_PELPB</name>
<organism>
    <name type="scientific">Pelodictyon phaeoclathratiforme (strain DSM 5477 / BU-1)</name>
    <dbReference type="NCBI Taxonomy" id="324925"/>
    <lineage>
        <taxon>Bacteria</taxon>
        <taxon>Pseudomonadati</taxon>
        <taxon>Chlorobiota</taxon>
        <taxon>Chlorobiia</taxon>
        <taxon>Chlorobiales</taxon>
        <taxon>Chlorobiaceae</taxon>
        <taxon>Chlorobium/Pelodictyon group</taxon>
        <taxon>Pelodictyon</taxon>
    </lineage>
</organism>
<evidence type="ECO:0000255" key="1">
    <source>
        <dbReference type="HAMAP-Rule" id="MF_00664"/>
    </source>
</evidence>
<comment type="function">
    <text evidence="1">Catalyzes the formation of phosphatidylethanolamine (PtdEtn) from phosphatidylserine (PtdSer).</text>
</comment>
<comment type="catalytic activity">
    <reaction evidence="1">
        <text>a 1,2-diacyl-sn-glycero-3-phospho-L-serine + H(+) = a 1,2-diacyl-sn-glycero-3-phosphoethanolamine + CO2</text>
        <dbReference type="Rhea" id="RHEA:20828"/>
        <dbReference type="ChEBI" id="CHEBI:15378"/>
        <dbReference type="ChEBI" id="CHEBI:16526"/>
        <dbReference type="ChEBI" id="CHEBI:57262"/>
        <dbReference type="ChEBI" id="CHEBI:64612"/>
        <dbReference type="EC" id="4.1.1.65"/>
    </reaction>
</comment>
<comment type="cofactor">
    <cofactor evidence="1">
        <name>pyruvate</name>
        <dbReference type="ChEBI" id="CHEBI:15361"/>
    </cofactor>
    <text evidence="1">Binds 1 pyruvoyl group covalently per subunit.</text>
</comment>
<comment type="pathway">
    <text evidence="1">Phospholipid metabolism; phosphatidylethanolamine biosynthesis; phosphatidylethanolamine from CDP-diacylglycerol: step 2/2.</text>
</comment>
<comment type="subunit">
    <text evidence="1">Heterodimer of a large membrane-associated beta subunit and a small pyruvoyl-containing alpha subunit.</text>
</comment>
<comment type="subcellular location">
    <subcellularLocation>
        <location evidence="1">Cell membrane</location>
        <topology evidence="1">Peripheral membrane protein</topology>
    </subcellularLocation>
</comment>
<comment type="PTM">
    <text evidence="1">Is synthesized initially as an inactive proenzyme. Formation of the active enzyme involves a self-maturation process in which the active site pyruvoyl group is generated from an internal serine residue via an autocatalytic post-translational modification. Two non-identical subunits are generated from the proenzyme in this reaction, and the pyruvate is formed at the N-terminus of the alpha chain, which is derived from the carboxyl end of the proenzyme. The post-translation cleavage follows an unusual pathway, termed non-hydrolytic serinolysis, in which the side chain hydroxyl group of the serine supplies its oxygen atom to form the C-terminus of the beta chain, while the remainder of the serine residue undergoes an oxidative deamination to produce ammonia and the pyruvoyl prosthetic group on the alpha chain.</text>
</comment>
<comment type="similarity">
    <text evidence="1">Belongs to the phosphatidylserine decarboxylase family. PSD-A subfamily.</text>
</comment>
<accession>B4SE07</accession>
<feature type="chain" id="PRO_1000131478" description="Phosphatidylserine decarboxylase beta chain" evidence="1">
    <location>
        <begin position="1"/>
        <end position="181"/>
    </location>
</feature>
<feature type="chain" id="PRO_1000131479" description="Phosphatidylserine decarboxylase alpha chain" evidence="1">
    <location>
        <begin position="182"/>
        <end position="212"/>
    </location>
</feature>
<feature type="active site" description="Schiff-base intermediate with substrate; via pyruvic acid" evidence="1">
    <location>
        <position position="182"/>
    </location>
</feature>
<feature type="site" description="Cleavage (non-hydrolytic); by autocatalysis" evidence="1">
    <location>
        <begin position="181"/>
        <end position="182"/>
    </location>
</feature>
<feature type="modified residue" description="Pyruvic acid (Ser); by autocatalysis" evidence="1">
    <location>
        <position position="182"/>
    </location>
</feature>
<keyword id="KW-1003">Cell membrane</keyword>
<keyword id="KW-0210">Decarboxylase</keyword>
<keyword id="KW-0444">Lipid biosynthesis</keyword>
<keyword id="KW-0443">Lipid metabolism</keyword>
<keyword id="KW-0456">Lyase</keyword>
<keyword id="KW-0472">Membrane</keyword>
<keyword id="KW-0594">Phospholipid biosynthesis</keyword>
<keyword id="KW-1208">Phospholipid metabolism</keyword>
<keyword id="KW-0670">Pyruvate</keyword>
<keyword id="KW-1185">Reference proteome</keyword>
<keyword id="KW-0865">Zymogen</keyword>
<proteinExistence type="inferred from homology"/>
<dbReference type="EC" id="4.1.1.65" evidence="1"/>
<dbReference type="EMBL" id="CP001110">
    <property type="protein sequence ID" value="ACF42998.1"/>
    <property type="molecule type" value="Genomic_DNA"/>
</dbReference>
<dbReference type="RefSeq" id="WP_012507493.1">
    <property type="nucleotide sequence ID" value="NC_011060.1"/>
</dbReference>
<dbReference type="STRING" id="324925.Ppha_0703"/>
<dbReference type="KEGG" id="pph:Ppha_0703"/>
<dbReference type="eggNOG" id="COG0688">
    <property type="taxonomic scope" value="Bacteria"/>
</dbReference>
<dbReference type="HOGENOM" id="CLU_072492_2_0_10"/>
<dbReference type="OrthoDB" id="9790893at2"/>
<dbReference type="UniPathway" id="UPA00558">
    <property type="reaction ID" value="UER00616"/>
</dbReference>
<dbReference type="Proteomes" id="UP000002724">
    <property type="component" value="Chromosome"/>
</dbReference>
<dbReference type="GO" id="GO:0005886">
    <property type="term" value="C:plasma membrane"/>
    <property type="evidence" value="ECO:0007669"/>
    <property type="project" value="UniProtKB-SubCell"/>
</dbReference>
<dbReference type="GO" id="GO:0004609">
    <property type="term" value="F:phosphatidylserine decarboxylase activity"/>
    <property type="evidence" value="ECO:0007669"/>
    <property type="project" value="UniProtKB-UniRule"/>
</dbReference>
<dbReference type="GO" id="GO:0006646">
    <property type="term" value="P:phosphatidylethanolamine biosynthetic process"/>
    <property type="evidence" value="ECO:0007669"/>
    <property type="project" value="UniProtKB-UniRule"/>
</dbReference>
<dbReference type="HAMAP" id="MF_00664">
    <property type="entry name" value="PS_decarb_PSD_A"/>
    <property type="match status" value="1"/>
</dbReference>
<dbReference type="InterPro" id="IPR003817">
    <property type="entry name" value="PS_Dcarbxylase"/>
</dbReference>
<dbReference type="InterPro" id="IPR033175">
    <property type="entry name" value="PSD-A"/>
</dbReference>
<dbReference type="NCBIfam" id="NF003678">
    <property type="entry name" value="PRK05305.1-2"/>
    <property type="match status" value="1"/>
</dbReference>
<dbReference type="NCBIfam" id="NF003682">
    <property type="entry name" value="PRK05305.2-2"/>
    <property type="match status" value="1"/>
</dbReference>
<dbReference type="NCBIfam" id="NF003685">
    <property type="entry name" value="PRK05305.2-5"/>
    <property type="match status" value="1"/>
</dbReference>
<dbReference type="PANTHER" id="PTHR35809">
    <property type="entry name" value="ARCHAETIDYLSERINE DECARBOXYLASE PROENZYME-RELATED"/>
    <property type="match status" value="1"/>
</dbReference>
<dbReference type="PANTHER" id="PTHR35809:SF1">
    <property type="entry name" value="ARCHAETIDYLSERINE DECARBOXYLASE PROENZYME-RELATED"/>
    <property type="match status" value="1"/>
</dbReference>
<dbReference type="Pfam" id="PF02666">
    <property type="entry name" value="PS_Dcarbxylase"/>
    <property type="match status" value="1"/>
</dbReference>
<protein>
    <recommendedName>
        <fullName evidence="1">Phosphatidylserine decarboxylase proenzyme</fullName>
        <ecNumber evidence="1">4.1.1.65</ecNumber>
    </recommendedName>
    <component>
        <recommendedName>
            <fullName evidence="1">Phosphatidylserine decarboxylase alpha chain</fullName>
        </recommendedName>
    </component>
    <component>
        <recommendedName>
            <fullName evidence="1">Phosphatidylserine decarboxylase beta chain</fullName>
        </recommendedName>
    </component>
</protein>
<gene>
    <name evidence="1" type="primary">psd</name>
    <name type="ordered locus">Ppha_0703</name>
</gene>
<reference key="1">
    <citation type="submission" date="2008-06" db="EMBL/GenBank/DDBJ databases">
        <title>Complete sequence of Pelodictyon phaeoclathratiforme BU-1.</title>
        <authorList>
            <consortium name="US DOE Joint Genome Institute"/>
            <person name="Lucas S."/>
            <person name="Copeland A."/>
            <person name="Lapidus A."/>
            <person name="Glavina del Rio T."/>
            <person name="Dalin E."/>
            <person name="Tice H."/>
            <person name="Bruce D."/>
            <person name="Goodwin L."/>
            <person name="Pitluck S."/>
            <person name="Schmutz J."/>
            <person name="Larimer F."/>
            <person name="Land M."/>
            <person name="Hauser L."/>
            <person name="Kyrpides N."/>
            <person name="Mikhailova N."/>
            <person name="Liu Z."/>
            <person name="Li T."/>
            <person name="Zhao F."/>
            <person name="Overmann J."/>
            <person name="Bryant D.A."/>
            <person name="Richardson P."/>
        </authorList>
    </citation>
    <scope>NUCLEOTIDE SEQUENCE [LARGE SCALE GENOMIC DNA]</scope>
    <source>
        <strain>DSM 5477 / BU-1</strain>
    </source>
</reference>
<sequence>MFTSYGYSTMIKVFLLCLAISAAALIFPLWAQIPIHLTTGLALLFTLYFFRDPKRVAPDEKRIILAPADGKILLVQKQNGNIAGKTSTLVSIFMSPLNVHVNRVPLSGKVTRLHYRPGQFLMAFDNRSMESNEKMEIGINNGEIEVQFSQVSGFLARRIVCQLQKGENVKLGNRFGMIKFGSRVDLILPPSATVLLQPGQRTRAGETILARY</sequence>